<reference key="1">
    <citation type="journal article" date="2005" name="Mol. Genet. Genomics">
        <title>A fine physical map of the rice chromosome 5.</title>
        <authorList>
            <person name="Cheng C.-H."/>
            <person name="Chung M.C."/>
            <person name="Liu S.-M."/>
            <person name="Chen S.-K."/>
            <person name="Kao F.Y."/>
            <person name="Lin S.-J."/>
            <person name="Hsiao S.-H."/>
            <person name="Tseng I.C."/>
            <person name="Hsing Y.-I.C."/>
            <person name="Wu H.-P."/>
            <person name="Chen C.-S."/>
            <person name="Shaw J.-F."/>
            <person name="Wu J."/>
            <person name="Matsumoto T."/>
            <person name="Sasaki T."/>
            <person name="Chen H.-C."/>
            <person name="Chow T.-Y."/>
        </authorList>
    </citation>
    <scope>NUCLEOTIDE SEQUENCE [LARGE SCALE GENOMIC DNA]</scope>
    <source>
        <strain>cv. Nipponbare</strain>
    </source>
</reference>
<reference key="2">
    <citation type="journal article" date="2005" name="Nature">
        <title>The map-based sequence of the rice genome.</title>
        <authorList>
            <consortium name="International rice genome sequencing project (IRGSP)"/>
        </authorList>
    </citation>
    <scope>NUCLEOTIDE SEQUENCE [LARGE SCALE GENOMIC DNA]</scope>
    <source>
        <strain>cv. Nipponbare</strain>
    </source>
</reference>
<reference key="3">
    <citation type="journal article" date="2008" name="Nucleic Acids Res.">
        <title>The rice annotation project database (RAP-DB): 2008 update.</title>
        <authorList>
            <consortium name="The rice annotation project (RAP)"/>
        </authorList>
    </citation>
    <scope>GENOME REANNOTATION</scope>
    <source>
        <strain>cv. Nipponbare</strain>
    </source>
</reference>
<reference key="4">
    <citation type="journal article" date="2013" name="Rice">
        <title>Improvement of the Oryza sativa Nipponbare reference genome using next generation sequence and optical map data.</title>
        <authorList>
            <person name="Kawahara Y."/>
            <person name="de la Bastide M."/>
            <person name="Hamilton J.P."/>
            <person name="Kanamori H."/>
            <person name="McCombie W.R."/>
            <person name="Ouyang S."/>
            <person name="Schwartz D.C."/>
            <person name="Tanaka T."/>
            <person name="Wu J."/>
            <person name="Zhou S."/>
            <person name="Childs K.L."/>
            <person name="Davidson R.M."/>
            <person name="Lin H."/>
            <person name="Quesada-Ocampo L."/>
            <person name="Vaillancourt B."/>
            <person name="Sakai H."/>
            <person name="Lee S.S."/>
            <person name="Kim J."/>
            <person name="Numa H."/>
            <person name="Itoh T."/>
            <person name="Buell C.R."/>
            <person name="Matsumoto T."/>
        </authorList>
    </citation>
    <scope>GENOME REANNOTATION</scope>
    <source>
        <strain>cv. Nipponbare</strain>
    </source>
</reference>
<reference key="5">
    <citation type="journal article" date="2005" name="PLoS Biol.">
        <title>The genomes of Oryza sativa: a history of duplications.</title>
        <authorList>
            <person name="Yu J."/>
            <person name="Wang J."/>
            <person name="Lin W."/>
            <person name="Li S."/>
            <person name="Li H."/>
            <person name="Zhou J."/>
            <person name="Ni P."/>
            <person name="Dong W."/>
            <person name="Hu S."/>
            <person name="Zeng C."/>
            <person name="Zhang J."/>
            <person name="Zhang Y."/>
            <person name="Li R."/>
            <person name="Xu Z."/>
            <person name="Li S."/>
            <person name="Li X."/>
            <person name="Zheng H."/>
            <person name="Cong L."/>
            <person name="Lin L."/>
            <person name="Yin J."/>
            <person name="Geng J."/>
            <person name="Li G."/>
            <person name="Shi J."/>
            <person name="Liu J."/>
            <person name="Lv H."/>
            <person name="Li J."/>
            <person name="Wang J."/>
            <person name="Deng Y."/>
            <person name="Ran L."/>
            <person name="Shi X."/>
            <person name="Wang X."/>
            <person name="Wu Q."/>
            <person name="Li C."/>
            <person name="Ren X."/>
            <person name="Wang J."/>
            <person name="Wang X."/>
            <person name="Li D."/>
            <person name="Liu D."/>
            <person name="Zhang X."/>
            <person name="Ji Z."/>
            <person name="Zhao W."/>
            <person name="Sun Y."/>
            <person name="Zhang Z."/>
            <person name="Bao J."/>
            <person name="Han Y."/>
            <person name="Dong L."/>
            <person name="Ji J."/>
            <person name="Chen P."/>
            <person name="Wu S."/>
            <person name="Liu J."/>
            <person name="Xiao Y."/>
            <person name="Bu D."/>
            <person name="Tan J."/>
            <person name="Yang L."/>
            <person name="Ye C."/>
            <person name="Zhang J."/>
            <person name="Xu J."/>
            <person name="Zhou Y."/>
            <person name="Yu Y."/>
            <person name="Zhang B."/>
            <person name="Zhuang S."/>
            <person name="Wei H."/>
            <person name="Liu B."/>
            <person name="Lei M."/>
            <person name="Yu H."/>
            <person name="Li Y."/>
            <person name="Xu H."/>
            <person name="Wei S."/>
            <person name="He X."/>
            <person name="Fang L."/>
            <person name="Zhang Z."/>
            <person name="Zhang Y."/>
            <person name="Huang X."/>
            <person name="Su Z."/>
            <person name="Tong W."/>
            <person name="Li J."/>
            <person name="Tong Z."/>
            <person name="Li S."/>
            <person name="Ye J."/>
            <person name="Wang L."/>
            <person name="Fang L."/>
            <person name="Lei T."/>
            <person name="Chen C.-S."/>
            <person name="Chen H.-C."/>
            <person name="Xu Z."/>
            <person name="Li H."/>
            <person name="Huang H."/>
            <person name="Zhang F."/>
            <person name="Xu H."/>
            <person name="Li N."/>
            <person name="Zhao C."/>
            <person name="Li S."/>
            <person name="Dong L."/>
            <person name="Huang Y."/>
            <person name="Li L."/>
            <person name="Xi Y."/>
            <person name="Qi Q."/>
            <person name="Li W."/>
            <person name="Zhang B."/>
            <person name="Hu W."/>
            <person name="Zhang Y."/>
            <person name="Tian X."/>
            <person name="Jiao Y."/>
            <person name="Liang X."/>
            <person name="Jin J."/>
            <person name="Gao L."/>
            <person name="Zheng W."/>
            <person name="Hao B."/>
            <person name="Liu S.-M."/>
            <person name="Wang W."/>
            <person name="Yuan L."/>
            <person name="Cao M."/>
            <person name="McDermott J."/>
            <person name="Samudrala R."/>
            <person name="Wang J."/>
            <person name="Wong G.K.-S."/>
            <person name="Yang H."/>
        </authorList>
    </citation>
    <scope>NUCLEOTIDE SEQUENCE [LARGE SCALE GENOMIC DNA]</scope>
    <source>
        <strain>cv. Nipponbare</strain>
    </source>
</reference>
<reference key="6">
    <citation type="journal article" date="2003" name="Science">
        <title>Collection, mapping, and annotation of over 28,000 cDNA clones from japonica rice.</title>
        <authorList>
            <consortium name="The rice full-length cDNA consortium"/>
        </authorList>
    </citation>
    <scope>NUCLEOTIDE SEQUENCE [LARGE SCALE MRNA]</scope>
    <source>
        <strain>cv. Nipponbare</strain>
    </source>
</reference>
<accession>Q0DHF6</accession>
<accession>P51847</accession>
<accession>Q6AUJ9</accession>
<proteinExistence type="evidence at transcript level"/>
<dbReference type="EC" id="4.1.1.1"/>
<dbReference type="EMBL" id="AC121364">
    <property type="protein sequence ID" value="AAT93945.1"/>
    <property type="molecule type" value="Genomic_DNA"/>
</dbReference>
<dbReference type="EMBL" id="AP008211">
    <property type="protein sequence ID" value="BAF17717.1"/>
    <property type="molecule type" value="Genomic_DNA"/>
</dbReference>
<dbReference type="EMBL" id="AP014961">
    <property type="protein sequence ID" value="BAS94476.1"/>
    <property type="molecule type" value="Genomic_DNA"/>
</dbReference>
<dbReference type="EMBL" id="CM000142">
    <property type="protein sequence ID" value="EAZ34626.1"/>
    <property type="molecule type" value="Genomic_DNA"/>
</dbReference>
<dbReference type="EMBL" id="AK100678">
    <property type="status" value="NOT_ANNOTATED_CDS"/>
    <property type="molecule type" value="mRNA"/>
</dbReference>
<dbReference type="RefSeq" id="XP_015637741.1">
    <property type="nucleotide sequence ID" value="XM_015782255.1"/>
</dbReference>
<dbReference type="SMR" id="Q0DHF6"/>
<dbReference type="FunCoup" id="Q0DHF6">
    <property type="interactions" value="141"/>
</dbReference>
<dbReference type="STRING" id="39947.Q0DHF6"/>
<dbReference type="PaxDb" id="39947-Q0DHF6"/>
<dbReference type="EnsemblPlants" id="Os05t0469600-01">
    <property type="protein sequence ID" value="Os05t0469600-01"/>
    <property type="gene ID" value="Os05g0469600"/>
</dbReference>
<dbReference type="Gramene" id="Os05t0469600-01">
    <property type="protein sequence ID" value="Os05t0469600-01"/>
    <property type="gene ID" value="Os05g0469600"/>
</dbReference>
<dbReference type="KEGG" id="dosa:Os05g0469600"/>
<dbReference type="eggNOG" id="KOG1184">
    <property type="taxonomic scope" value="Eukaryota"/>
</dbReference>
<dbReference type="HOGENOM" id="CLU_013748_0_2_1"/>
<dbReference type="InParanoid" id="Q0DHF6"/>
<dbReference type="OMA" id="AQEISVM"/>
<dbReference type="OrthoDB" id="3970464at2759"/>
<dbReference type="PlantReactome" id="R-OSA-1119460">
    <property type="pathway name" value="Isoleucine biosynthesis from threonine"/>
</dbReference>
<dbReference type="PlantReactome" id="R-OSA-1119486">
    <property type="pathway name" value="IAA biosynthesis I"/>
</dbReference>
<dbReference type="PlantReactome" id="R-OSA-1119600">
    <property type="pathway name" value="Valine biosynthesis"/>
</dbReference>
<dbReference type="Proteomes" id="UP000000763">
    <property type="component" value="Chromosome 5"/>
</dbReference>
<dbReference type="Proteomes" id="UP000007752">
    <property type="component" value="Chromosome 5"/>
</dbReference>
<dbReference type="Proteomes" id="UP000059680">
    <property type="component" value="Chromosome 5"/>
</dbReference>
<dbReference type="ExpressionAtlas" id="Q0DHF6">
    <property type="expression patterns" value="baseline and differential"/>
</dbReference>
<dbReference type="GO" id="GO:0005829">
    <property type="term" value="C:cytosol"/>
    <property type="evidence" value="ECO:0000318"/>
    <property type="project" value="GO_Central"/>
</dbReference>
<dbReference type="GO" id="GO:0000287">
    <property type="term" value="F:magnesium ion binding"/>
    <property type="evidence" value="ECO:0007669"/>
    <property type="project" value="InterPro"/>
</dbReference>
<dbReference type="GO" id="GO:0004737">
    <property type="term" value="F:pyruvate decarboxylase activity"/>
    <property type="evidence" value="ECO:0000318"/>
    <property type="project" value="GO_Central"/>
</dbReference>
<dbReference type="GO" id="GO:0030976">
    <property type="term" value="F:thiamine pyrophosphate binding"/>
    <property type="evidence" value="ECO:0007669"/>
    <property type="project" value="InterPro"/>
</dbReference>
<dbReference type="GO" id="GO:0000949">
    <property type="term" value="P:aromatic amino acid family catabolic process to alcohol via Ehrlich pathway"/>
    <property type="evidence" value="ECO:0000318"/>
    <property type="project" value="GO_Central"/>
</dbReference>
<dbReference type="CDD" id="cd02005">
    <property type="entry name" value="TPP_PDC_IPDC"/>
    <property type="match status" value="1"/>
</dbReference>
<dbReference type="CDD" id="cd07038">
    <property type="entry name" value="TPP_PYR_PDC_IPDC_like"/>
    <property type="match status" value="1"/>
</dbReference>
<dbReference type="FunFam" id="3.40.50.1220:FF:000009">
    <property type="entry name" value="Pyruvate decarboxylase 1"/>
    <property type="match status" value="1"/>
</dbReference>
<dbReference type="FunFam" id="3.40.50.970:FF:000021">
    <property type="entry name" value="Pyruvate decarboxylase 1"/>
    <property type="match status" value="1"/>
</dbReference>
<dbReference type="FunFam" id="3.40.50.970:FF:000017">
    <property type="entry name" value="pyruvate decarboxylase 1"/>
    <property type="match status" value="1"/>
</dbReference>
<dbReference type="Gene3D" id="3.40.50.970">
    <property type="match status" value="2"/>
</dbReference>
<dbReference type="Gene3D" id="3.40.50.1220">
    <property type="entry name" value="TPP-binding domain"/>
    <property type="match status" value="1"/>
</dbReference>
<dbReference type="InterPro" id="IPR029035">
    <property type="entry name" value="DHS-like_NAD/FAD-binding_dom"/>
</dbReference>
<dbReference type="InterPro" id="IPR012110">
    <property type="entry name" value="PDC/IPDC-like"/>
</dbReference>
<dbReference type="InterPro" id="IPR029061">
    <property type="entry name" value="THDP-binding"/>
</dbReference>
<dbReference type="InterPro" id="IPR012000">
    <property type="entry name" value="Thiamin_PyroP_enz_cen_dom"/>
</dbReference>
<dbReference type="InterPro" id="IPR012001">
    <property type="entry name" value="Thiamin_PyroP_enz_TPP-bd_dom"/>
</dbReference>
<dbReference type="InterPro" id="IPR011766">
    <property type="entry name" value="TPP_enzyme_TPP-bd"/>
</dbReference>
<dbReference type="InterPro" id="IPR047214">
    <property type="entry name" value="TPP_PDC_IPDC"/>
</dbReference>
<dbReference type="InterPro" id="IPR047213">
    <property type="entry name" value="TPP_PYR_PDC_IPDC-like"/>
</dbReference>
<dbReference type="PANTHER" id="PTHR43452">
    <property type="entry name" value="PYRUVATE DECARBOXYLASE"/>
    <property type="match status" value="1"/>
</dbReference>
<dbReference type="PANTHER" id="PTHR43452:SF7">
    <property type="entry name" value="PYRUVATE DECARBOXYLASE 1"/>
    <property type="match status" value="1"/>
</dbReference>
<dbReference type="Pfam" id="PF02775">
    <property type="entry name" value="TPP_enzyme_C"/>
    <property type="match status" value="1"/>
</dbReference>
<dbReference type="Pfam" id="PF00205">
    <property type="entry name" value="TPP_enzyme_M"/>
    <property type="match status" value="1"/>
</dbReference>
<dbReference type="Pfam" id="PF02776">
    <property type="entry name" value="TPP_enzyme_N"/>
    <property type="match status" value="1"/>
</dbReference>
<dbReference type="PIRSF" id="PIRSF036565">
    <property type="entry name" value="Pyruvt_ip_decrb"/>
    <property type="match status" value="1"/>
</dbReference>
<dbReference type="SUPFAM" id="SSF52467">
    <property type="entry name" value="DHS-like NAD/FAD-binding domain"/>
    <property type="match status" value="1"/>
</dbReference>
<dbReference type="SUPFAM" id="SSF52518">
    <property type="entry name" value="Thiamin diphosphate-binding fold (THDP-binding)"/>
    <property type="match status" value="2"/>
</dbReference>
<feature type="chain" id="PRO_0000090779" description="Pyruvate decarboxylase 1">
    <location>
        <begin position="1"/>
        <end position="605"/>
    </location>
</feature>
<feature type="region of interest" description="Thiamine pyrophosphate binding">
    <location>
        <begin position="432"/>
        <end position="514"/>
    </location>
</feature>
<feature type="binding site" evidence="1">
    <location>
        <position position="67"/>
    </location>
    <ligand>
        <name>substrate</name>
    </ligand>
</feature>
<feature type="binding site" evidence="1">
    <location>
        <position position="154"/>
    </location>
    <ligand>
        <name>substrate</name>
    </ligand>
</feature>
<feature type="binding site" evidence="1">
    <location>
        <position position="482"/>
    </location>
    <ligand>
        <name>Mg(2+)</name>
        <dbReference type="ChEBI" id="CHEBI:18420"/>
    </ligand>
</feature>
<feature type="binding site" evidence="1">
    <location>
        <position position="509"/>
    </location>
    <ligand>
        <name>Mg(2+)</name>
        <dbReference type="ChEBI" id="CHEBI:18420"/>
    </ligand>
</feature>
<feature type="binding site" evidence="1">
    <location>
        <position position="511"/>
    </location>
    <ligand>
        <name>Mg(2+)</name>
        <dbReference type="ChEBI" id="CHEBI:18420"/>
    </ligand>
</feature>
<feature type="binding site" evidence="1">
    <location>
        <position position="515"/>
    </location>
    <ligand>
        <name>substrate</name>
    </ligand>
</feature>
<gene>
    <name type="primary">PDC1</name>
    <name type="ordered locus">Os05g0469600</name>
    <name type="ordered locus">LOC_Os05g39310</name>
    <name type="ORF">OsJ_018109</name>
    <name type="ORF">OSJNBa0052E20.2</name>
</gene>
<organism>
    <name type="scientific">Oryza sativa subsp. japonica</name>
    <name type="common">Rice</name>
    <dbReference type="NCBI Taxonomy" id="39947"/>
    <lineage>
        <taxon>Eukaryota</taxon>
        <taxon>Viridiplantae</taxon>
        <taxon>Streptophyta</taxon>
        <taxon>Embryophyta</taxon>
        <taxon>Tracheophyta</taxon>
        <taxon>Spermatophyta</taxon>
        <taxon>Magnoliopsida</taxon>
        <taxon>Liliopsida</taxon>
        <taxon>Poales</taxon>
        <taxon>Poaceae</taxon>
        <taxon>BOP clade</taxon>
        <taxon>Oryzoideae</taxon>
        <taxon>Oryzeae</taxon>
        <taxon>Oryzinae</taxon>
        <taxon>Oryza</taxon>
        <taxon>Oryza sativa</taxon>
    </lineage>
</organism>
<keyword id="KW-0210">Decarboxylase</keyword>
<keyword id="KW-0456">Lyase</keyword>
<keyword id="KW-0460">Magnesium</keyword>
<keyword id="KW-0479">Metal-binding</keyword>
<keyword id="KW-1185">Reference proteome</keyword>
<keyword id="KW-0786">Thiamine pyrophosphate</keyword>
<evidence type="ECO:0000250" key="1"/>
<evidence type="ECO:0000305" key="2"/>
<protein>
    <recommendedName>
        <fullName>Pyruvate decarboxylase 1</fullName>
        <shortName>PDC</shortName>
        <ecNumber>4.1.1.1</ecNumber>
    </recommendedName>
</protein>
<comment type="catalytic activity">
    <reaction>
        <text>a 2-oxocarboxylate + H(+) = an aldehyde + CO2</text>
        <dbReference type="Rhea" id="RHEA:11628"/>
        <dbReference type="ChEBI" id="CHEBI:15378"/>
        <dbReference type="ChEBI" id="CHEBI:16526"/>
        <dbReference type="ChEBI" id="CHEBI:17478"/>
        <dbReference type="ChEBI" id="CHEBI:35179"/>
        <dbReference type="EC" id="4.1.1.1"/>
    </reaction>
</comment>
<comment type="cofactor">
    <cofactor>
        <name>a metal cation</name>
        <dbReference type="ChEBI" id="CHEBI:25213"/>
    </cofactor>
    <text>Binds 1 metal ion per subunit.</text>
</comment>
<comment type="cofactor">
    <cofactor>
        <name>thiamine diphosphate</name>
        <dbReference type="ChEBI" id="CHEBI:58937"/>
    </cofactor>
    <text>Binds 1 thiamine pyrophosphate per subunit.</text>
</comment>
<comment type="subunit">
    <text evidence="2">Homotetramer.</text>
</comment>
<comment type="similarity">
    <text evidence="2">Belongs to the TPP enzyme family.</text>
</comment>
<sequence>MELALVGNPSNGVAKPSCNSVGSLPVVSSNAVINPPVTSAAGATLGRHLARRLVQIGATDVFAVPGDFNLTLLDYLIAEPGLKLIGCCNELNAGYAADGYARARGVGACAVTFTVGGLSVLNAIAGAYSENLPVICIVGGPNSNDYGTNRILHHTIGLPDFSQELRCFQTITCYQAVINNLDDAHEQIDTAIATALRESKPVYISVGCNLAGLSHPTFSREPVPLFISPRLSNKANLEYAVEAAADFLNKAVKPVMVGGPKIRVAKAKKAFAGIAESSGYPFAVMPSAKGLVPEHHPRFIGTYWGAVSTTFCAEIVESADAYLFAGPIFNDYSSVGYSLLLKREKAVIVQPDRVVVGNGPAFGCILMTEFLDALAKRLDRNTTAYDNYRRIFIPDREPPNGQPDEPLRVNILFKHIKEMLSGDTAVIAETGDSWFNCQKLRLPEGCGYEFQMQYGSIGWSVGATLGYAQAAKDKRVISCIGDGSFQMTAQDVSTMLRCGQKSIIFLINNGGYTIEVEIHDGPYNVIKNWDYTGLIDAIHNSDGNCWTKKVRTEEELIEAIATATGAKKDCLCFIEIIVHKDDTSKELLEWGSRVSAANSRPPNPQ</sequence>
<name>PDC1_ORYSJ</name>